<accession>A6T146</accession>
<gene>
    <name evidence="1" type="primary">rpmG</name>
    <name type="ordered locus">mma_2553</name>
</gene>
<organism>
    <name type="scientific">Janthinobacterium sp. (strain Marseille)</name>
    <name type="common">Minibacterium massiliensis</name>
    <dbReference type="NCBI Taxonomy" id="375286"/>
    <lineage>
        <taxon>Bacteria</taxon>
        <taxon>Pseudomonadati</taxon>
        <taxon>Pseudomonadota</taxon>
        <taxon>Betaproteobacteria</taxon>
        <taxon>Burkholderiales</taxon>
        <taxon>Oxalobacteraceae</taxon>
        <taxon>Janthinobacterium</taxon>
    </lineage>
</organism>
<sequence length="55" mass="6387">MAKSGRDKIKLESTAGTGHFYTTTKNKRTTPEKMAIMKFDPKVRKHVEYKETKIK</sequence>
<protein>
    <recommendedName>
        <fullName evidence="1">Large ribosomal subunit protein bL33</fullName>
    </recommendedName>
    <alternativeName>
        <fullName evidence="3">50S ribosomal protein L33</fullName>
    </alternativeName>
</protein>
<reference key="1">
    <citation type="journal article" date="2007" name="PLoS Genet.">
        <title>Genome analysis of Minibacterium massiliensis highlights the convergent evolution of water-living bacteria.</title>
        <authorList>
            <person name="Audic S."/>
            <person name="Robert C."/>
            <person name="Campagna B."/>
            <person name="Parinello H."/>
            <person name="Claverie J.-M."/>
            <person name="Raoult D."/>
            <person name="Drancourt M."/>
        </authorList>
    </citation>
    <scope>NUCLEOTIDE SEQUENCE [LARGE SCALE GENOMIC DNA]</scope>
    <source>
        <strain>Marseille</strain>
    </source>
</reference>
<name>RL33_JANMA</name>
<dbReference type="EMBL" id="CP000269">
    <property type="protein sequence ID" value="ABR91647.1"/>
    <property type="molecule type" value="Genomic_DNA"/>
</dbReference>
<dbReference type="RefSeq" id="WP_012080405.1">
    <property type="nucleotide sequence ID" value="NC_009659.1"/>
</dbReference>
<dbReference type="SMR" id="A6T146"/>
<dbReference type="STRING" id="375286.mma_2553"/>
<dbReference type="KEGG" id="mms:mma_2553"/>
<dbReference type="eggNOG" id="COG0267">
    <property type="taxonomic scope" value="Bacteria"/>
</dbReference>
<dbReference type="HOGENOM" id="CLU_190949_1_1_4"/>
<dbReference type="OrthoDB" id="21586at2"/>
<dbReference type="Proteomes" id="UP000006388">
    <property type="component" value="Chromosome"/>
</dbReference>
<dbReference type="GO" id="GO:0022625">
    <property type="term" value="C:cytosolic large ribosomal subunit"/>
    <property type="evidence" value="ECO:0007669"/>
    <property type="project" value="TreeGrafter"/>
</dbReference>
<dbReference type="GO" id="GO:0003735">
    <property type="term" value="F:structural constituent of ribosome"/>
    <property type="evidence" value="ECO:0007669"/>
    <property type="project" value="InterPro"/>
</dbReference>
<dbReference type="GO" id="GO:0006412">
    <property type="term" value="P:translation"/>
    <property type="evidence" value="ECO:0007669"/>
    <property type="project" value="UniProtKB-UniRule"/>
</dbReference>
<dbReference type="FunFam" id="2.20.28.120:FF:000001">
    <property type="entry name" value="50S ribosomal protein L33"/>
    <property type="match status" value="1"/>
</dbReference>
<dbReference type="Gene3D" id="2.20.28.120">
    <property type="entry name" value="Ribosomal protein L33"/>
    <property type="match status" value="1"/>
</dbReference>
<dbReference type="HAMAP" id="MF_00294">
    <property type="entry name" value="Ribosomal_bL33"/>
    <property type="match status" value="1"/>
</dbReference>
<dbReference type="InterPro" id="IPR001705">
    <property type="entry name" value="Ribosomal_bL33"/>
</dbReference>
<dbReference type="InterPro" id="IPR018264">
    <property type="entry name" value="Ribosomal_bL33_CS"/>
</dbReference>
<dbReference type="InterPro" id="IPR038584">
    <property type="entry name" value="Ribosomal_bL33_sf"/>
</dbReference>
<dbReference type="InterPro" id="IPR011332">
    <property type="entry name" value="Ribosomal_zn-bd"/>
</dbReference>
<dbReference type="NCBIfam" id="NF001860">
    <property type="entry name" value="PRK00595.1"/>
    <property type="match status" value="1"/>
</dbReference>
<dbReference type="NCBIfam" id="TIGR01023">
    <property type="entry name" value="rpmG_bact"/>
    <property type="match status" value="1"/>
</dbReference>
<dbReference type="PANTHER" id="PTHR15238">
    <property type="entry name" value="54S RIBOSOMAL PROTEIN L39, MITOCHONDRIAL"/>
    <property type="match status" value="1"/>
</dbReference>
<dbReference type="PANTHER" id="PTHR15238:SF1">
    <property type="entry name" value="LARGE RIBOSOMAL SUBUNIT PROTEIN BL33M"/>
    <property type="match status" value="1"/>
</dbReference>
<dbReference type="Pfam" id="PF00471">
    <property type="entry name" value="Ribosomal_L33"/>
    <property type="match status" value="1"/>
</dbReference>
<dbReference type="SUPFAM" id="SSF57829">
    <property type="entry name" value="Zn-binding ribosomal proteins"/>
    <property type="match status" value="1"/>
</dbReference>
<dbReference type="PROSITE" id="PS00582">
    <property type="entry name" value="RIBOSOMAL_L33"/>
    <property type="match status" value="1"/>
</dbReference>
<keyword id="KW-0687">Ribonucleoprotein</keyword>
<keyword id="KW-0689">Ribosomal protein</keyword>
<feature type="chain" id="PRO_1000115135" description="Large ribosomal subunit protein bL33">
    <location>
        <begin position="1"/>
        <end position="55"/>
    </location>
</feature>
<feature type="region of interest" description="Disordered" evidence="2">
    <location>
        <begin position="1"/>
        <end position="28"/>
    </location>
</feature>
<feature type="compositionally biased region" description="Basic and acidic residues" evidence="2">
    <location>
        <begin position="1"/>
        <end position="11"/>
    </location>
</feature>
<feature type="compositionally biased region" description="Polar residues" evidence="2">
    <location>
        <begin position="14"/>
        <end position="24"/>
    </location>
</feature>
<comment type="similarity">
    <text evidence="1">Belongs to the bacterial ribosomal protein bL33 family.</text>
</comment>
<proteinExistence type="inferred from homology"/>
<evidence type="ECO:0000255" key="1">
    <source>
        <dbReference type="HAMAP-Rule" id="MF_00294"/>
    </source>
</evidence>
<evidence type="ECO:0000256" key="2">
    <source>
        <dbReference type="SAM" id="MobiDB-lite"/>
    </source>
</evidence>
<evidence type="ECO:0000305" key="3"/>